<evidence type="ECO:0000255" key="1">
    <source>
        <dbReference type="HAMAP-Rule" id="MF_00251"/>
    </source>
</evidence>
<evidence type="ECO:0000305" key="2"/>
<dbReference type="EMBL" id="CP000868">
    <property type="protein sequence ID" value="ABX13966.1"/>
    <property type="molecule type" value="Genomic_DNA"/>
</dbReference>
<dbReference type="EMBL" id="AP009385">
    <property type="protein sequence ID" value="BAG44868.1"/>
    <property type="molecule type" value="Genomic_DNA"/>
</dbReference>
<dbReference type="RefSeq" id="WP_004199844.1">
    <property type="nucleotide sequence ID" value="NC_010804.1"/>
</dbReference>
<dbReference type="SMR" id="A9ADL5"/>
<dbReference type="STRING" id="395019.BMULJ_02983"/>
<dbReference type="GeneID" id="98107138"/>
<dbReference type="KEGG" id="bmj:BMULJ_02983"/>
<dbReference type="KEGG" id="bmu:Bmul_0271"/>
<dbReference type="eggNOG" id="COG0257">
    <property type="taxonomic scope" value="Bacteria"/>
</dbReference>
<dbReference type="HOGENOM" id="CLU_135723_6_2_4"/>
<dbReference type="Proteomes" id="UP000008815">
    <property type="component" value="Chromosome 1"/>
</dbReference>
<dbReference type="GO" id="GO:0005737">
    <property type="term" value="C:cytoplasm"/>
    <property type="evidence" value="ECO:0007669"/>
    <property type="project" value="UniProtKB-ARBA"/>
</dbReference>
<dbReference type="GO" id="GO:1990904">
    <property type="term" value="C:ribonucleoprotein complex"/>
    <property type="evidence" value="ECO:0007669"/>
    <property type="project" value="UniProtKB-KW"/>
</dbReference>
<dbReference type="GO" id="GO:0005840">
    <property type="term" value="C:ribosome"/>
    <property type="evidence" value="ECO:0007669"/>
    <property type="project" value="UniProtKB-KW"/>
</dbReference>
<dbReference type="GO" id="GO:0003735">
    <property type="term" value="F:structural constituent of ribosome"/>
    <property type="evidence" value="ECO:0007669"/>
    <property type="project" value="InterPro"/>
</dbReference>
<dbReference type="GO" id="GO:0006412">
    <property type="term" value="P:translation"/>
    <property type="evidence" value="ECO:0007669"/>
    <property type="project" value="UniProtKB-UniRule"/>
</dbReference>
<dbReference type="HAMAP" id="MF_00251">
    <property type="entry name" value="Ribosomal_bL36"/>
    <property type="match status" value="1"/>
</dbReference>
<dbReference type="InterPro" id="IPR000473">
    <property type="entry name" value="Ribosomal_bL36"/>
</dbReference>
<dbReference type="InterPro" id="IPR035977">
    <property type="entry name" value="Ribosomal_bL36_sp"/>
</dbReference>
<dbReference type="NCBIfam" id="TIGR01022">
    <property type="entry name" value="rpmJ_bact"/>
    <property type="match status" value="1"/>
</dbReference>
<dbReference type="PANTHER" id="PTHR42888">
    <property type="entry name" value="50S RIBOSOMAL PROTEIN L36, CHLOROPLASTIC"/>
    <property type="match status" value="1"/>
</dbReference>
<dbReference type="PANTHER" id="PTHR42888:SF1">
    <property type="entry name" value="LARGE RIBOSOMAL SUBUNIT PROTEIN BL36C"/>
    <property type="match status" value="1"/>
</dbReference>
<dbReference type="Pfam" id="PF00444">
    <property type="entry name" value="Ribosomal_L36"/>
    <property type="match status" value="1"/>
</dbReference>
<dbReference type="SUPFAM" id="SSF57840">
    <property type="entry name" value="Ribosomal protein L36"/>
    <property type="match status" value="1"/>
</dbReference>
<dbReference type="PROSITE" id="PS00828">
    <property type="entry name" value="RIBOSOMAL_L36"/>
    <property type="match status" value="1"/>
</dbReference>
<name>RL36_BURM1</name>
<gene>
    <name evidence="1" type="primary">rpmJ</name>
    <name type="ordered locus">Bmul_0271</name>
    <name type="ordered locus">BMULJ_02983</name>
</gene>
<organism>
    <name type="scientific">Burkholderia multivorans (strain ATCC 17616 / 249)</name>
    <dbReference type="NCBI Taxonomy" id="395019"/>
    <lineage>
        <taxon>Bacteria</taxon>
        <taxon>Pseudomonadati</taxon>
        <taxon>Pseudomonadota</taxon>
        <taxon>Betaproteobacteria</taxon>
        <taxon>Burkholderiales</taxon>
        <taxon>Burkholderiaceae</taxon>
        <taxon>Burkholderia</taxon>
        <taxon>Burkholderia cepacia complex</taxon>
    </lineage>
</organism>
<keyword id="KW-1185">Reference proteome</keyword>
<keyword id="KW-0687">Ribonucleoprotein</keyword>
<keyword id="KW-0689">Ribosomal protein</keyword>
<accession>A9ADL5</accession>
<protein>
    <recommendedName>
        <fullName evidence="1">Large ribosomal subunit protein bL36</fullName>
    </recommendedName>
    <alternativeName>
        <fullName evidence="2">50S ribosomal protein L36</fullName>
    </alternativeName>
</protein>
<feature type="chain" id="PRO_1000101010" description="Large ribosomal subunit protein bL36">
    <location>
        <begin position="1"/>
        <end position="38"/>
    </location>
</feature>
<proteinExistence type="inferred from homology"/>
<comment type="similarity">
    <text evidence="1">Belongs to the bacterial ribosomal protein bL36 family.</text>
</comment>
<reference key="1">
    <citation type="submission" date="2007-10" db="EMBL/GenBank/DDBJ databases">
        <title>Complete sequence of chromosome 1 of Burkholderia multivorans ATCC 17616.</title>
        <authorList>
            <person name="Copeland A."/>
            <person name="Lucas S."/>
            <person name="Lapidus A."/>
            <person name="Barry K."/>
            <person name="Glavina del Rio T."/>
            <person name="Dalin E."/>
            <person name="Tice H."/>
            <person name="Pitluck S."/>
            <person name="Chain P."/>
            <person name="Malfatti S."/>
            <person name="Shin M."/>
            <person name="Vergez L."/>
            <person name="Schmutz J."/>
            <person name="Larimer F."/>
            <person name="Land M."/>
            <person name="Hauser L."/>
            <person name="Kyrpides N."/>
            <person name="Kim E."/>
            <person name="Tiedje J."/>
            <person name="Richardson P."/>
        </authorList>
    </citation>
    <scope>NUCLEOTIDE SEQUENCE [LARGE SCALE GENOMIC DNA]</scope>
    <source>
        <strain>ATCC 17616 / 249</strain>
    </source>
</reference>
<reference key="2">
    <citation type="submission" date="2007-04" db="EMBL/GenBank/DDBJ databases">
        <title>Complete genome sequence of Burkholderia multivorans ATCC 17616.</title>
        <authorList>
            <person name="Ohtsubo Y."/>
            <person name="Yamashita A."/>
            <person name="Kurokawa K."/>
            <person name="Takami H."/>
            <person name="Yuhara S."/>
            <person name="Nishiyama E."/>
            <person name="Endo R."/>
            <person name="Miyazaki R."/>
            <person name="Ono A."/>
            <person name="Yano K."/>
            <person name="Ito M."/>
            <person name="Sota M."/>
            <person name="Yuji N."/>
            <person name="Hattori M."/>
            <person name="Tsuda M."/>
        </authorList>
    </citation>
    <scope>NUCLEOTIDE SEQUENCE [LARGE SCALE GENOMIC DNA]</scope>
    <source>
        <strain>ATCC 17616 / 249</strain>
    </source>
</reference>
<sequence length="38" mass="4410">MKVMASVKRICRNCKIIKRKGVVRVICSSDPRHKQRQG</sequence>